<reference key="1">
    <citation type="journal article" date="2004" name="Nat. Genet.">
        <title>Complete sequencing and characterization of 21,243 full-length human cDNAs.</title>
        <authorList>
            <person name="Ota T."/>
            <person name="Suzuki Y."/>
            <person name="Nishikawa T."/>
            <person name="Otsuki T."/>
            <person name="Sugiyama T."/>
            <person name="Irie R."/>
            <person name="Wakamatsu A."/>
            <person name="Hayashi K."/>
            <person name="Sato H."/>
            <person name="Nagai K."/>
            <person name="Kimura K."/>
            <person name="Makita H."/>
            <person name="Sekine M."/>
            <person name="Obayashi M."/>
            <person name="Nishi T."/>
            <person name="Shibahara T."/>
            <person name="Tanaka T."/>
            <person name="Ishii S."/>
            <person name="Yamamoto J."/>
            <person name="Saito K."/>
            <person name="Kawai Y."/>
            <person name="Isono Y."/>
            <person name="Nakamura Y."/>
            <person name="Nagahari K."/>
            <person name="Murakami K."/>
            <person name="Yasuda T."/>
            <person name="Iwayanagi T."/>
            <person name="Wagatsuma M."/>
            <person name="Shiratori A."/>
            <person name="Sudo H."/>
            <person name="Hosoiri T."/>
            <person name="Kaku Y."/>
            <person name="Kodaira H."/>
            <person name="Kondo H."/>
            <person name="Sugawara M."/>
            <person name="Takahashi M."/>
            <person name="Kanda K."/>
            <person name="Yokoi T."/>
            <person name="Furuya T."/>
            <person name="Kikkawa E."/>
            <person name="Omura Y."/>
            <person name="Abe K."/>
            <person name="Kamihara K."/>
            <person name="Katsuta N."/>
            <person name="Sato K."/>
            <person name="Tanikawa M."/>
            <person name="Yamazaki M."/>
            <person name="Ninomiya K."/>
            <person name="Ishibashi T."/>
            <person name="Yamashita H."/>
            <person name="Murakawa K."/>
            <person name="Fujimori K."/>
            <person name="Tanai H."/>
            <person name="Kimata M."/>
            <person name="Watanabe M."/>
            <person name="Hiraoka S."/>
            <person name="Chiba Y."/>
            <person name="Ishida S."/>
            <person name="Ono Y."/>
            <person name="Takiguchi S."/>
            <person name="Watanabe S."/>
            <person name="Yosida M."/>
            <person name="Hotuta T."/>
            <person name="Kusano J."/>
            <person name="Kanehori K."/>
            <person name="Takahashi-Fujii A."/>
            <person name="Hara H."/>
            <person name="Tanase T.-O."/>
            <person name="Nomura Y."/>
            <person name="Togiya S."/>
            <person name="Komai F."/>
            <person name="Hara R."/>
            <person name="Takeuchi K."/>
            <person name="Arita M."/>
            <person name="Imose N."/>
            <person name="Musashino K."/>
            <person name="Yuuki H."/>
            <person name="Oshima A."/>
            <person name="Sasaki N."/>
            <person name="Aotsuka S."/>
            <person name="Yoshikawa Y."/>
            <person name="Matsunawa H."/>
            <person name="Ichihara T."/>
            <person name="Shiohata N."/>
            <person name="Sano S."/>
            <person name="Moriya S."/>
            <person name="Momiyama H."/>
            <person name="Satoh N."/>
            <person name="Takami S."/>
            <person name="Terashima Y."/>
            <person name="Suzuki O."/>
            <person name="Nakagawa S."/>
            <person name="Senoh A."/>
            <person name="Mizoguchi H."/>
            <person name="Goto Y."/>
            <person name="Shimizu F."/>
            <person name="Wakebe H."/>
            <person name="Hishigaki H."/>
            <person name="Watanabe T."/>
            <person name="Sugiyama A."/>
            <person name="Takemoto M."/>
            <person name="Kawakami B."/>
            <person name="Yamazaki M."/>
            <person name="Watanabe K."/>
            <person name="Kumagai A."/>
            <person name="Itakura S."/>
            <person name="Fukuzumi Y."/>
            <person name="Fujimori Y."/>
            <person name="Komiyama M."/>
            <person name="Tashiro H."/>
            <person name="Tanigami A."/>
            <person name="Fujiwara T."/>
            <person name="Ono T."/>
            <person name="Yamada K."/>
            <person name="Fujii Y."/>
            <person name="Ozaki K."/>
            <person name="Hirao M."/>
            <person name="Ohmori Y."/>
            <person name="Kawabata A."/>
            <person name="Hikiji T."/>
            <person name="Kobatake N."/>
            <person name="Inagaki H."/>
            <person name="Ikema Y."/>
            <person name="Okamoto S."/>
            <person name="Okitani R."/>
            <person name="Kawakami T."/>
            <person name="Noguchi S."/>
            <person name="Itoh T."/>
            <person name="Shigeta K."/>
            <person name="Senba T."/>
            <person name="Matsumura K."/>
            <person name="Nakajima Y."/>
            <person name="Mizuno T."/>
            <person name="Morinaga M."/>
            <person name="Sasaki M."/>
            <person name="Togashi T."/>
            <person name="Oyama M."/>
            <person name="Hata H."/>
            <person name="Watanabe M."/>
            <person name="Komatsu T."/>
            <person name="Mizushima-Sugano J."/>
            <person name="Satoh T."/>
            <person name="Shirai Y."/>
            <person name="Takahashi Y."/>
            <person name="Nakagawa K."/>
            <person name="Okumura K."/>
            <person name="Nagase T."/>
            <person name="Nomura N."/>
            <person name="Kikuchi H."/>
            <person name="Masuho Y."/>
            <person name="Yamashita R."/>
            <person name="Nakai K."/>
            <person name="Yada T."/>
            <person name="Nakamura Y."/>
            <person name="Ohara O."/>
            <person name="Isogai T."/>
            <person name="Sugano S."/>
        </authorList>
    </citation>
    <scope>NUCLEOTIDE SEQUENCE [LARGE SCALE MRNA]</scope>
    <source>
        <tissue>Brain cortex</tissue>
    </source>
</reference>
<reference key="2">
    <citation type="journal article" date="2007" name="BMC Genomics">
        <title>The full-ORF clone resource of the German cDNA consortium.</title>
        <authorList>
            <person name="Bechtel S."/>
            <person name="Rosenfelder H."/>
            <person name="Duda A."/>
            <person name="Schmidt C.P."/>
            <person name="Ernst U."/>
            <person name="Wellenreuther R."/>
            <person name="Mehrle A."/>
            <person name="Schuster C."/>
            <person name="Bahr A."/>
            <person name="Bloecker H."/>
            <person name="Heubner D."/>
            <person name="Hoerlein A."/>
            <person name="Michel G."/>
            <person name="Wedler H."/>
            <person name="Koehrer K."/>
            <person name="Ottenwaelder B."/>
            <person name="Poustka A."/>
            <person name="Wiemann S."/>
            <person name="Schupp I."/>
        </authorList>
    </citation>
    <scope>NUCLEOTIDE SEQUENCE [LARGE SCALE MRNA]</scope>
    <scope>VARIANT HIS-184</scope>
    <source>
        <tissue>Lymph node</tissue>
    </source>
</reference>
<reference key="3">
    <citation type="journal article" date="2003" name="Nature">
        <title>The DNA sequence and analysis of human chromosome 6.</title>
        <authorList>
            <person name="Mungall A.J."/>
            <person name="Palmer S.A."/>
            <person name="Sims S.K."/>
            <person name="Edwards C.A."/>
            <person name="Ashurst J.L."/>
            <person name="Wilming L."/>
            <person name="Jones M.C."/>
            <person name="Horton R."/>
            <person name="Hunt S.E."/>
            <person name="Scott C.E."/>
            <person name="Gilbert J.G.R."/>
            <person name="Clamp M.E."/>
            <person name="Bethel G."/>
            <person name="Milne S."/>
            <person name="Ainscough R."/>
            <person name="Almeida J.P."/>
            <person name="Ambrose K.D."/>
            <person name="Andrews T.D."/>
            <person name="Ashwell R.I.S."/>
            <person name="Babbage A.K."/>
            <person name="Bagguley C.L."/>
            <person name="Bailey J."/>
            <person name="Banerjee R."/>
            <person name="Barker D.J."/>
            <person name="Barlow K.F."/>
            <person name="Bates K."/>
            <person name="Beare D.M."/>
            <person name="Beasley H."/>
            <person name="Beasley O."/>
            <person name="Bird C.P."/>
            <person name="Blakey S.E."/>
            <person name="Bray-Allen S."/>
            <person name="Brook J."/>
            <person name="Brown A.J."/>
            <person name="Brown J.Y."/>
            <person name="Burford D.C."/>
            <person name="Burrill W."/>
            <person name="Burton J."/>
            <person name="Carder C."/>
            <person name="Carter N.P."/>
            <person name="Chapman J.C."/>
            <person name="Clark S.Y."/>
            <person name="Clark G."/>
            <person name="Clee C.M."/>
            <person name="Clegg S."/>
            <person name="Cobley V."/>
            <person name="Collier R.E."/>
            <person name="Collins J.E."/>
            <person name="Colman L.K."/>
            <person name="Corby N.R."/>
            <person name="Coville G.J."/>
            <person name="Culley K.M."/>
            <person name="Dhami P."/>
            <person name="Davies J."/>
            <person name="Dunn M."/>
            <person name="Earthrowl M.E."/>
            <person name="Ellington A.E."/>
            <person name="Evans K.A."/>
            <person name="Faulkner L."/>
            <person name="Francis M.D."/>
            <person name="Frankish A."/>
            <person name="Frankland J."/>
            <person name="French L."/>
            <person name="Garner P."/>
            <person name="Garnett J."/>
            <person name="Ghori M.J."/>
            <person name="Gilby L.M."/>
            <person name="Gillson C.J."/>
            <person name="Glithero R.J."/>
            <person name="Grafham D.V."/>
            <person name="Grant M."/>
            <person name="Gribble S."/>
            <person name="Griffiths C."/>
            <person name="Griffiths M.N.D."/>
            <person name="Hall R."/>
            <person name="Halls K.S."/>
            <person name="Hammond S."/>
            <person name="Harley J.L."/>
            <person name="Hart E.A."/>
            <person name="Heath P.D."/>
            <person name="Heathcott R."/>
            <person name="Holmes S.J."/>
            <person name="Howden P.J."/>
            <person name="Howe K.L."/>
            <person name="Howell G.R."/>
            <person name="Huckle E."/>
            <person name="Humphray S.J."/>
            <person name="Humphries M.D."/>
            <person name="Hunt A.R."/>
            <person name="Johnson C.M."/>
            <person name="Joy A.A."/>
            <person name="Kay M."/>
            <person name="Keenan S.J."/>
            <person name="Kimberley A.M."/>
            <person name="King A."/>
            <person name="Laird G.K."/>
            <person name="Langford C."/>
            <person name="Lawlor S."/>
            <person name="Leongamornlert D.A."/>
            <person name="Leversha M."/>
            <person name="Lloyd C.R."/>
            <person name="Lloyd D.M."/>
            <person name="Loveland J.E."/>
            <person name="Lovell J."/>
            <person name="Martin S."/>
            <person name="Mashreghi-Mohammadi M."/>
            <person name="Maslen G.L."/>
            <person name="Matthews L."/>
            <person name="McCann O.T."/>
            <person name="McLaren S.J."/>
            <person name="McLay K."/>
            <person name="McMurray A."/>
            <person name="Moore M.J.F."/>
            <person name="Mullikin J.C."/>
            <person name="Niblett D."/>
            <person name="Nickerson T."/>
            <person name="Novik K.L."/>
            <person name="Oliver K."/>
            <person name="Overton-Larty E.K."/>
            <person name="Parker A."/>
            <person name="Patel R."/>
            <person name="Pearce A.V."/>
            <person name="Peck A.I."/>
            <person name="Phillimore B.J.C.T."/>
            <person name="Phillips S."/>
            <person name="Plumb R.W."/>
            <person name="Porter K.M."/>
            <person name="Ramsey Y."/>
            <person name="Ranby S.A."/>
            <person name="Rice C.M."/>
            <person name="Ross M.T."/>
            <person name="Searle S.M."/>
            <person name="Sehra H.K."/>
            <person name="Sheridan E."/>
            <person name="Skuce C.D."/>
            <person name="Smith S."/>
            <person name="Smith M."/>
            <person name="Spraggon L."/>
            <person name="Squares S.L."/>
            <person name="Steward C.A."/>
            <person name="Sycamore N."/>
            <person name="Tamlyn-Hall G."/>
            <person name="Tester J."/>
            <person name="Theaker A.J."/>
            <person name="Thomas D.W."/>
            <person name="Thorpe A."/>
            <person name="Tracey A."/>
            <person name="Tromans A."/>
            <person name="Tubby B."/>
            <person name="Wall M."/>
            <person name="Wallis J.M."/>
            <person name="West A.P."/>
            <person name="White S.S."/>
            <person name="Whitehead S.L."/>
            <person name="Whittaker H."/>
            <person name="Wild A."/>
            <person name="Willey D.J."/>
            <person name="Wilmer T.E."/>
            <person name="Wood J.M."/>
            <person name="Wray P.W."/>
            <person name="Wyatt J.C."/>
            <person name="Young L."/>
            <person name="Younger R.M."/>
            <person name="Bentley D.R."/>
            <person name="Coulson A."/>
            <person name="Durbin R.M."/>
            <person name="Hubbard T."/>
            <person name="Sulston J.E."/>
            <person name="Dunham I."/>
            <person name="Rogers J."/>
            <person name="Beck S."/>
        </authorList>
    </citation>
    <scope>NUCLEOTIDE SEQUENCE [LARGE SCALE GENOMIC DNA]</scope>
</reference>
<reference key="4">
    <citation type="journal article" date="2004" name="Genome Res.">
        <title>The status, quality, and expansion of the NIH full-length cDNA project: the Mammalian Gene Collection (MGC).</title>
        <authorList>
            <consortium name="The MGC Project Team"/>
        </authorList>
    </citation>
    <scope>NUCLEOTIDE SEQUENCE [LARGE SCALE MRNA]</scope>
    <scope>VARIANTS HIS-184 AND GLN-189</scope>
    <source>
        <tissue>Brain</tissue>
        <tissue>Skin</tissue>
    </source>
</reference>
<reference key="5">
    <citation type="journal article" date="2006" name="Science">
        <title>The consensus coding sequences of human breast and colorectal cancers.</title>
        <authorList>
            <person name="Sjoeblom T."/>
            <person name="Jones S."/>
            <person name="Wood L.D."/>
            <person name="Parsons D.W."/>
            <person name="Lin J."/>
            <person name="Barber T.D."/>
            <person name="Mandelker D."/>
            <person name="Leary R.J."/>
            <person name="Ptak J."/>
            <person name="Silliman N."/>
            <person name="Szabo S."/>
            <person name="Buckhaults P."/>
            <person name="Farrell C."/>
            <person name="Meeh P."/>
            <person name="Markowitz S.D."/>
            <person name="Willis J."/>
            <person name="Dawson D."/>
            <person name="Willson J.K.V."/>
            <person name="Gazdar A.F."/>
            <person name="Hartigan J."/>
            <person name="Wu L."/>
            <person name="Liu C."/>
            <person name="Parmigiani G."/>
            <person name="Park B.H."/>
            <person name="Bachman K.E."/>
            <person name="Papadopoulos N."/>
            <person name="Vogelstein B."/>
            <person name="Kinzler K.W."/>
            <person name="Velculescu V.E."/>
        </authorList>
    </citation>
    <scope>VARIANT [LARGE SCALE ANALYSIS] GLN-203</scope>
</reference>
<organism>
    <name type="scientific">Homo sapiens</name>
    <name type="common">Human</name>
    <dbReference type="NCBI Taxonomy" id="9606"/>
    <lineage>
        <taxon>Eukaryota</taxon>
        <taxon>Metazoa</taxon>
        <taxon>Chordata</taxon>
        <taxon>Craniata</taxon>
        <taxon>Vertebrata</taxon>
        <taxon>Euteleostomi</taxon>
        <taxon>Mammalia</taxon>
        <taxon>Eutheria</taxon>
        <taxon>Euarchontoglires</taxon>
        <taxon>Primates</taxon>
        <taxon>Haplorrhini</taxon>
        <taxon>Catarrhini</taxon>
        <taxon>Hominidae</taxon>
        <taxon>Homo</taxon>
    </lineage>
</organism>
<feature type="chain" id="PRO_0000297573" description="PX domain-containing protein 1">
    <location>
        <begin position="1"/>
        <end position="231"/>
    </location>
</feature>
<feature type="domain" description="PX">
    <location>
        <begin position="1"/>
        <end position="134"/>
    </location>
</feature>
<feature type="sequence variant" id="VAR_034643" description="In dbSNP:rs226959." evidence="1 3">
    <original>Q</original>
    <variation>H</variation>
    <location>
        <position position="184"/>
    </location>
</feature>
<feature type="sequence variant" id="VAR_034644" description="In dbSNP:rs17855666." evidence="1">
    <original>P</original>
    <variation>Q</variation>
    <location>
        <position position="189"/>
    </location>
</feature>
<feature type="sequence variant" id="VAR_035619" description="In a breast cancer sample; somatic mutation; dbSNP:rs368727869." evidence="2">
    <original>E</original>
    <variation>Q</variation>
    <location>
        <position position="203"/>
    </location>
</feature>
<sequence length="231" mass="26560">MASAVFEGTSLVNMFVRGCWVNGIRRLIVSRRGDEEEFFEIRTEWSDRSVLYLHRSLADLGRLWQRLRDAFPEDRSELAQGPLRQGLVAIKEAHDIETRLNEVEKLLKTIISMPCKYSRSEVVLTFFERSPLDQVLKNDNVHKIQPSFQSPVKISEIMRSNGFCLANTETIVIDHSIPNGRDQQLGVDPTEHLFENGSEFPSELEDGDDPAAYVTNLSYYHLVPFETDIWD</sequence>
<keyword id="KW-1267">Proteomics identification</keyword>
<keyword id="KW-1185">Reference proteome</keyword>
<gene>
    <name type="primary">PXDC1</name>
    <name type="synonym">C6orf145</name>
</gene>
<proteinExistence type="evidence at protein level"/>
<name>PXDC1_HUMAN</name>
<protein>
    <recommendedName>
        <fullName>PX domain-containing protein 1</fullName>
    </recommendedName>
</protein>
<dbReference type="EMBL" id="AK289598">
    <property type="protein sequence ID" value="BAF82287.1"/>
    <property type="molecule type" value="mRNA"/>
</dbReference>
<dbReference type="EMBL" id="AL832792">
    <property type="protein sequence ID" value="CAI46167.1"/>
    <property type="molecule type" value="mRNA"/>
</dbReference>
<dbReference type="EMBL" id="AL391422">
    <property type="status" value="NOT_ANNOTATED_CDS"/>
    <property type="molecule type" value="Genomic_DNA"/>
</dbReference>
<dbReference type="EMBL" id="AL033523">
    <property type="status" value="NOT_ANNOTATED_CDS"/>
    <property type="molecule type" value="Genomic_DNA"/>
</dbReference>
<dbReference type="EMBL" id="BC045715">
    <property type="protein sequence ID" value="AAH45715.3"/>
    <property type="molecule type" value="mRNA"/>
</dbReference>
<dbReference type="EMBL" id="BC056908">
    <property type="protein sequence ID" value="AAH56908.1"/>
    <property type="molecule type" value="mRNA"/>
</dbReference>
<dbReference type="CCDS" id="CCDS4486.1"/>
<dbReference type="RefSeq" id="NP_899229.2">
    <property type="nucleotide sequence ID" value="NM_183373.4"/>
</dbReference>
<dbReference type="SMR" id="Q5TGL8"/>
<dbReference type="BioGRID" id="128751">
    <property type="interactions" value="8"/>
</dbReference>
<dbReference type="FunCoup" id="Q5TGL8">
    <property type="interactions" value="59"/>
</dbReference>
<dbReference type="IntAct" id="Q5TGL8">
    <property type="interactions" value="9"/>
</dbReference>
<dbReference type="STRING" id="9606.ENSP00000369636"/>
<dbReference type="iPTMnet" id="Q5TGL8"/>
<dbReference type="PhosphoSitePlus" id="Q5TGL8"/>
<dbReference type="BioMuta" id="PXDC1"/>
<dbReference type="DMDM" id="215274177"/>
<dbReference type="jPOST" id="Q5TGL8"/>
<dbReference type="MassIVE" id="Q5TGL8"/>
<dbReference type="PaxDb" id="9606-ENSP00000369636"/>
<dbReference type="PeptideAtlas" id="Q5TGL8"/>
<dbReference type="ProteomicsDB" id="65122"/>
<dbReference type="Pumba" id="Q5TGL8"/>
<dbReference type="TopDownProteomics" id="Q5TGL8"/>
<dbReference type="Antibodypedia" id="2913">
    <property type="antibodies" value="39 antibodies from 7 providers"/>
</dbReference>
<dbReference type="DNASU" id="221749"/>
<dbReference type="Ensembl" id="ENST00000380283.5">
    <property type="protein sequence ID" value="ENSP00000369636.5"/>
    <property type="gene ID" value="ENSG00000168994.14"/>
</dbReference>
<dbReference type="GeneID" id="221749"/>
<dbReference type="KEGG" id="hsa:221749"/>
<dbReference type="MANE-Select" id="ENST00000380283.5">
    <property type="protein sequence ID" value="ENSP00000369636.5"/>
    <property type="RefSeq nucleotide sequence ID" value="NM_183373.4"/>
    <property type="RefSeq protein sequence ID" value="NP_899229.2"/>
</dbReference>
<dbReference type="UCSC" id="uc003mvt.3">
    <property type="organism name" value="human"/>
</dbReference>
<dbReference type="AGR" id="HGNC:21361"/>
<dbReference type="CTD" id="221749"/>
<dbReference type="GeneCards" id="PXDC1"/>
<dbReference type="HGNC" id="HGNC:21361">
    <property type="gene designation" value="PXDC1"/>
</dbReference>
<dbReference type="HPA" id="ENSG00000168994">
    <property type="expression patterns" value="Tissue enhanced (liver)"/>
</dbReference>
<dbReference type="neXtProt" id="NX_Q5TGL8"/>
<dbReference type="OpenTargets" id="ENSG00000168994"/>
<dbReference type="PharmGKB" id="PA134944183"/>
<dbReference type="VEuPathDB" id="HostDB:ENSG00000168994"/>
<dbReference type="eggNOG" id="ENOG502QQ4P">
    <property type="taxonomic scope" value="Eukaryota"/>
</dbReference>
<dbReference type="GeneTree" id="ENSGT00390000009209"/>
<dbReference type="HOGENOM" id="CLU_1199438_0_0_1"/>
<dbReference type="InParanoid" id="Q5TGL8"/>
<dbReference type="OMA" id="ISMPWKY"/>
<dbReference type="OrthoDB" id="9933228at2759"/>
<dbReference type="PAN-GO" id="Q5TGL8">
    <property type="GO annotations" value="0 GO annotations based on evolutionary models"/>
</dbReference>
<dbReference type="PhylomeDB" id="Q5TGL8"/>
<dbReference type="TreeFam" id="TF331154"/>
<dbReference type="PathwayCommons" id="Q5TGL8"/>
<dbReference type="SignaLink" id="Q5TGL8"/>
<dbReference type="BioGRID-ORCS" id="221749">
    <property type="hits" value="16 hits in 1154 CRISPR screens"/>
</dbReference>
<dbReference type="ChiTaRS" id="PXDC1">
    <property type="organism name" value="human"/>
</dbReference>
<dbReference type="GenomeRNAi" id="221749"/>
<dbReference type="Pharos" id="Q5TGL8">
    <property type="development level" value="Tdark"/>
</dbReference>
<dbReference type="PRO" id="PR:Q5TGL8"/>
<dbReference type="Proteomes" id="UP000005640">
    <property type="component" value="Chromosome 6"/>
</dbReference>
<dbReference type="RNAct" id="Q5TGL8">
    <property type="molecule type" value="protein"/>
</dbReference>
<dbReference type="Bgee" id="ENSG00000168994">
    <property type="expression patterns" value="Expressed in ascending aorta and 202 other cell types or tissues"/>
</dbReference>
<dbReference type="ExpressionAtlas" id="Q5TGL8">
    <property type="expression patterns" value="baseline and differential"/>
</dbReference>
<dbReference type="GO" id="GO:0035091">
    <property type="term" value="F:phosphatidylinositol binding"/>
    <property type="evidence" value="ECO:0007669"/>
    <property type="project" value="InterPro"/>
</dbReference>
<dbReference type="Gene3D" id="3.30.1520.10">
    <property type="entry name" value="Phox-like domain"/>
    <property type="match status" value="1"/>
</dbReference>
<dbReference type="InterPro" id="IPR036871">
    <property type="entry name" value="PX_dom_sf"/>
</dbReference>
<dbReference type="InterPro" id="IPR040288">
    <property type="entry name" value="PXDC1"/>
</dbReference>
<dbReference type="PANTHER" id="PTHR31433">
    <property type="entry name" value="PX DOMAIN-CONTAINING PROTEIN 1"/>
    <property type="match status" value="1"/>
</dbReference>
<dbReference type="PANTHER" id="PTHR31433:SF0">
    <property type="entry name" value="PX DOMAIN-CONTAINING PROTEIN 1"/>
    <property type="match status" value="1"/>
</dbReference>
<dbReference type="SUPFAM" id="SSF64268">
    <property type="entry name" value="PX domain"/>
    <property type="match status" value="1"/>
</dbReference>
<accession>Q5TGL8</accession>
<accession>A8K0N3</accession>
<accession>Q6PGP0</accession>
<accession>Q86XB7</accession>
<evidence type="ECO:0000269" key="1">
    <source>
    </source>
</evidence>
<evidence type="ECO:0000269" key="2">
    <source>
    </source>
</evidence>
<evidence type="ECO:0000269" key="3">
    <source>
    </source>
</evidence>